<accession>B4RCD1</accession>
<proteinExistence type="inferred from homology"/>
<reference key="1">
    <citation type="journal article" date="2008" name="BMC Genomics">
        <title>Complete genome of Phenylobacterium zucineum - a novel facultative intracellular bacterium isolated from human erythroleukemia cell line K562.</title>
        <authorList>
            <person name="Luo Y."/>
            <person name="Xu X."/>
            <person name="Ding Z."/>
            <person name="Liu Z."/>
            <person name="Zhang B."/>
            <person name="Yan Z."/>
            <person name="Sun J."/>
            <person name="Hu S."/>
            <person name="Hu X."/>
        </authorList>
    </citation>
    <scope>NUCLEOTIDE SEQUENCE [LARGE SCALE GENOMIC DNA]</scope>
    <source>
        <strain>HLK1</strain>
    </source>
</reference>
<sequence length="178" mass="18798">MLKIRLARGGAKKRPYYSIVIADSHSPRDGRFIEKVGSYNPLLKKDDPNRIVVKQERIQEWLGKGAQPTDRVARELSKLGITQWTAGNNPKKGEPGQKAKERAEERAQREADRAAAAAEAAAAPAEEAPAEEAPAEEAAAEAAPEAAAAEEAPAAEAAAEEAAPAAEEAAPAEGEEQA</sequence>
<keyword id="KW-1185">Reference proteome</keyword>
<keyword id="KW-0687">Ribonucleoprotein</keyword>
<keyword id="KW-0689">Ribosomal protein</keyword>
<evidence type="ECO:0000255" key="1">
    <source>
        <dbReference type="HAMAP-Rule" id="MF_00385"/>
    </source>
</evidence>
<evidence type="ECO:0000256" key="2">
    <source>
        <dbReference type="SAM" id="MobiDB-lite"/>
    </source>
</evidence>
<evidence type="ECO:0000305" key="3"/>
<feature type="chain" id="PRO_1000196451" description="Small ribosomal subunit protein bS16">
    <location>
        <begin position="1"/>
        <end position="178"/>
    </location>
</feature>
<feature type="region of interest" description="Disordered" evidence="2">
    <location>
        <begin position="78"/>
        <end position="178"/>
    </location>
</feature>
<feature type="compositionally biased region" description="Basic and acidic residues" evidence="2">
    <location>
        <begin position="91"/>
        <end position="113"/>
    </location>
</feature>
<feature type="compositionally biased region" description="Low complexity" evidence="2">
    <location>
        <begin position="114"/>
        <end position="127"/>
    </location>
</feature>
<feature type="compositionally biased region" description="Acidic residues" evidence="2">
    <location>
        <begin position="128"/>
        <end position="139"/>
    </location>
</feature>
<feature type="compositionally biased region" description="Low complexity" evidence="2">
    <location>
        <begin position="140"/>
        <end position="172"/>
    </location>
</feature>
<organism>
    <name type="scientific">Phenylobacterium zucineum (strain HLK1)</name>
    <dbReference type="NCBI Taxonomy" id="450851"/>
    <lineage>
        <taxon>Bacteria</taxon>
        <taxon>Pseudomonadati</taxon>
        <taxon>Pseudomonadota</taxon>
        <taxon>Alphaproteobacteria</taxon>
        <taxon>Caulobacterales</taxon>
        <taxon>Caulobacteraceae</taxon>
        <taxon>Phenylobacterium</taxon>
    </lineage>
</organism>
<dbReference type="EMBL" id="CP000747">
    <property type="protein sequence ID" value="ACG76530.1"/>
    <property type="molecule type" value="Genomic_DNA"/>
</dbReference>
<dbReference type="RefSeq" id="WP_012520678.1">
    <property type="nucleotide sequence ID" value="NC_011144.1"/>
</dbReference>
<dbReference type="SMR" id="B4RCD1"/>
<dbReference type="STRING" id="450851.PHZ_c0116"/>
<dbReference type="KEGG" id="pzu:PHZ_c0116"/>
<dbReference type="eggNOG" id="COG0228">
    <property type="taxonomic scope" value="Bacteria"/>
</dbReference>
<dbReference type="HOGENOM" id="CLU_100590_3_0_5"/>
<dbReference type="OrthoDB" id="9807878at2"/>
<dbReference type="Proteomes" id="UP000001868">
    <property type="component" value="Chromosome"/>
</dbReference>
<dbReference type="GO" id="GO:0005737">
    <property type="term" value="C:cytoplasm"/>
    <property type="evidence" value="ECO:0007669"/>
    <property type="project" value="UniProtKB-ARBA"/>
</dbReference>
<dbReference type="GO" id="GO:0015935">
    <property type="term" value="C:small ribosomal subunit"/>
    <property type="evidence" value="ECO:0007669"/>
    <property type="project" value="TreeGrafter"/>
</dbReference>
<dbReference type="GO" id="GO:0003735">
    <property type="term" value="F:structural constituent of ribosome"/>
    <property type="evidence" value="ECO:0007669"/>
    <property type="project" value="InterPro"/>
</dbReference>
<dbReference type="GO" id="GO:0006412">
    <property type="term" value="P:translation"/>
    <property type="evidence" value="ECO:0007669"/>
    <property type="project" value="UniProtKB-UniRule"/>
</dbReference>
<dbReference type="Gene3D" id="3.30.1320.10">
    <property type="match status" value="1"/>
</dbReference>
<dbReference type="HAMAP" id="MF_00385">
    <property type="entry name" value="Ribosomal_bS16"/>
    <property type="match status" value="1"/>
</dbReference>
<dbReference type="InterPro" id="IPR000307">
    <property type="entry name" value="Ribosomal_bS16"/>
</dbReference>
<dbReference type="InterPro" id="IPR020592">
    <property type="entry name" value="Ribosomal_bS16_CS"/>
</dbReference>
<dbReference type="InterPro" id="IPR023803">
    <property type="entry name" value="Ribosomal_bS16_dom_sf"/>
</dbReference>
<dbReference type="NCBIfam" id="TIGR00002">
    <property type="entry name" value="S16"/>
    <property type="match status" value="1"/>
</dbReference>
<dbReference type="PANTHER" id="PTHR12919">
    <property type="entry name" value="30S RIBOSOMAL PROTEIN S16"/>
    <property type="match status" value="1"/>
</dbReference>
<dbReference type="PANTHER" id="PTHR12919:SF20">
    <property type="entry name" value="SMALL RIBOSOMAL SUBUNIT PROTEIN BS16M"/>
    <property type="match status" value="1"/>
</dbReference>
<dbReference type="Pfam" id="PF00886">
    <property type="entry name" value="Ribosomal_S16"/>
    <property type="match status" value="1"/>
</dbReference>
<dbReference type="SUPFAM" id="SSF54565">
    <property type="entry name" value="Ribosomal protein S16"/>
    <property type="match status" value="1"/>
</dbReference>
<dbReference type="PROSITE" id="PS00732">
    <property type="entry name" value="RIBOSOMAL_S16"/>
    <property type="match status" value="1"/>
</dbReference>
<comment type="similarity">
    <text evidence="1">Belongs to the bacterial ribosomal protein bS16 family.</text>
</comment>
<gene>
    <name evidence="1" type="primary">rpsP</name>
    <name type="ordered locus">PHZ_c0116</name>
</gene>
<protein>
    <recommendedName>
        <fullName evidence="1">Small ribosomal subunit protein bS16</fullName>
    </recommendedName>
    <alternativeName>
        <fullName evidence="3">30S ribosomal protein S16</fullName>
    </alternativeName>
</protein>
<name>RS16_PHEZH</name>